<protein>
    <recommendedName>
        <fullName evidence="1">UPF0306 protein YhbP</fullName>
    </recommendedName>
</protein>
<name>YHBP_ECOHS</name>
<comment type="similarity">
    <text evidence="1">Belongs to the UPF0306 family.</text>
</comment>
<accession>A8A4X0</accession>
<reference key="1">
    <citation type="journal article" date="2008" name="J. Bacteriol.">
        <title>The pangenome structure of Escherichia coli: comparative genomic analysis of E. coli commensal and pathogenic isolates.</title>
        <authorList>
            <person name="Rasko D.A."/>
            <person name="Rosovitz M.J."/>
            <person name="Myers G.S.A."/>
            <person name="Mongodin E.F."/>
            <person name="Fricke W.F."/>
            <person name="Gajer P."/>
            <person name="Crabtree J."/>
            <person name="Sebaihia M."/>
            <person name="Thomson N.R."/>
            <person name="Chaudhuri R."/>
            <person name="Henderson I.R."/>
            <person name="Sperandio V."/>
            <person name="Ravel J."/>
        </authorList>
    </citation>
    <scope>NUCLEOTIDE SEQUENCE [LARGE SCALE GENOMIC DNA]</scope>
    <source>
        <strain>HS</strain>
    </source>
</reference>
<evidence type="ECO:0000255" key="1">
    <source>
        <dbReference type="HAMAP-Rule" id="MF_00764"/>
    </source>
</evidence>
<dbReference type="EMBL" id="CP000802">
    <property type="protein sequence ID" value="ABV07574.1"/>
    <property type="molecule type" value="Genomic_DNA"/>
</dbReference>
<dbReference type="RefSeq" id="WP_000449030.1">
    <property type="nucleotide sequence ID" value="NC_009800.1"/>
</dbReference>
<dbReference type="SMR" id="A8A4X0"/>
<dbReference type="KEGG" id="ecx:EcHS_A3346"/>
<dbReference type="HOGENOM" id="CLU_105087_3_0_6"/>
<dbReference type="FunFam" id="2.30.110.10:FF:000003">
    <property type="entry name" value="UPF0306 protein YhbP"/>
    <property type="match status" value="1"/>
</dbReference>
<dbReference type="Gene3D" id="2.30.110.10">
    <property type="entry name" value="Electron Transport, Fmn-binding Protein, Chain A"/>
    <property type="match status" value="1"/>
</dbReference>
<dbReference type="HAMAP" id="MF_00764">
    <property type="entry name" value="UPF0306"/>
    <property type="match status" value="1"/>
</dbReference>
<dbReference type="InterPro" id="IPR012349">
    <property type="entry name" value="Split_barrel_FMN-bd"/>
</dbReference>
<dbReference type="InterPro" id="IPR011194">
    <property type="entry name" value="UPF0306"/>
</dbReference>
<dbReference type="NCBIfam" id="NF002900">
    <property type="entry name" value="PRK03467.1"/>
    <property type="match status" value="1"/>
</dbReference>
<dbReference type="PIRSF" id="PIRSF009554">
    <property type="entry name" value="UCP009554"/>
    <property type="match status" value="1"/>
</dbReference>
<dbReference type="SUPFAM" id="SSF50475">
    <property type="entry name" value="FMN-binding split barrel"/>
    <property type="match status" value="1"/>
</dbReference>
<sequence>METLIAISRWLAKQHVVTWCVQQEGELWCANAFYLFDAQKVAFYILTEEKTRHAQMSGPQAAVAGTVNGQPKTVALIRGVQFKGEIRRLEGEESDLARKAYNRRFPVARMLSAPVWEIRLDEIKFTDNTLGFGKKMIWLRDSGTEQA</sequence>
<gene>
    <name evidence="1" type="primary">yhbP</name>
    <name type="ordered locus">EcHS_A3346</name>
</gene>
<organism>
    <name type="scientific">Escherichia coli O9:H4 (strain HS)</name>
    <dbReference type="NCBI Taxonomy" id="331112"/>
    <lineage>
        <taxon>Bacteria</taxon>
        <taxon>Pseudomonadati</taxon>
        <taxon>Pseudomonadota</taxon>
        <taxon>Gammaproteobacteria</taxon>
        <taxon>Enterobacterales</taxon>
        <taxon>Enterobacteriaceae</taxon>
        <taxon>Escherichia</taxon>
    </lineage>
</organism>
<proteinExistence type="inferred from homology"/>
<feature type="chain" id="PRO_1000062213" description="UPF0306 protein YhbP">
    <location>
        <begin position="1"/>
        <end position="147"/>
    </location>
</feature>